<feature type="chain" id="PRO_0000093914" description="RNA polymerase sigma factor SigA">
    <location>
        <begin position="1"/>
        <end position="368"/>
    </location>
</feature>
<feature type="DNA-binding region" description="H-T-H motif" evidence="1">
    <location>
        <begin position="329"/>
        <end position="348"/>
    </location>
</feature>
<feature type="region of interest" description="Disordered" evidence="2">
    <location>
        <begin position="69"/>
        <end position="90"/>
    </location>
</feature>
<feature type="region of interest" description="Sigma-70 factor domain-2" evidence="1">
    <location>
        <begin position="135"/>
        <end position="205"/>
    </location>
</feature>
<feature type="region of interest" description="Sigma-70 factor domain-3" evidence="1">
    <location>
        <begin position="214"/>
        <end position="290"/>
    </location>
</feature>
<feature type="region of interest" description="Sigma-70 factor domain-4" evidence="1">
    <location>
        <begin position="303"/>
        <end position="356"/>
    </location>
</feature>
<feature type="short sequence motif" description="Interaction with polymerase core subunit RpoC">
    <location>
        <begin position="159"/>
        <end position="162"/>
    </location>
</feature>
<feature type="compositionally biased region" description="Basic and acidic residues" evidence="2">
    <location>
        <begin position="71"/>
        <end position="83"/>
    </location>
</feature>
<protein>
    <recommendedName>
        <fullName evidence="1">RNA polymerase sigma factor SigA</fullName>
    </recommendedName>
</protein>
<evidence type="ECO:0000255" key="1">
    <source>
        <dbReference type="HAMAP-Rule" id="MF_00963"/>
    </source>
</evidence>
<evidence type="ECO:0000256" key="2">
    <source>
        <dbReference type="SAM" id="MobiDB-lite"/>
    </source>
</evidence>
<accession>Q99TT5</accession>
<dbReference type="EMBL" id="BA000018">
    <property type="protein sequence ID" value="BAB42653.1"/>
    <property type="molecule type" value="Genomic_DNA"/>
</dbReference>
<dbReference type="PIR" id="H89936">
    <property type="entry name" value="H89936"/>
</dbReference>
<dbReference type="RefSeq" id="WP_001283057.1">
    <property type="nucleotide sequence ID" value="NC_002745.2"/>
</dbReference>
<dbReference type="EMDB" id="EMD-38087"/>
<dbReference type="SMR" id="Q99TT5"/>
<dbReference type="EnsemblBacteria" id="BAB42653">
    <property type="protein sequence ID" value="BAB42653"/>
    <property type="gene ID" value="BAB42653"/>
</dbReference>
<dbReference type="KEGG" id="sau:SA1390"/>
<dbReference type="HOGENOM" id="CLU_014793_3_3_9"/>
<dbReference type="GO" id="GO:0005737">
    <property type="term" value="C:cytoplasm"/>
    <property type="evidence" value="ECO:0007669"/>
    <property type="project" value="UniProtKB-SubCell"/>
</dbReference>
<dbReference type="GO" id="GO:0003677">
    <property type="term" value="F:DNA binding"/>
    <property type="evidence" value="ECO:0007669"/>
    <property type="project" value="UniProtKB-UniRule"/>
</dbReference>
<dbReference type="GO" id="GO:0016987">
    <property type="term" value="F:sigma factor activity"/>
    <property type="evidence" value="ECO:0007669"/>
    <property type="project" value="UniProtKB-UniRule"/>
</dbReference>
<dbReference type="GO" id="GO:0006352">
    <property type="term" value="P:DNA-templated transcription initiation"/>
    <property type="evidence" value="ECO:0007669"/>
    <property type="project" value="UniProtKB-UniRule"/>
</dbReference>
<dbReference type="CDD" id="cd06171">
    <property type="entry name" value="Sigma70_r4"/>
    <property type="match status" value="1"/>
</dbReference>
<dbReference type="FunFam" id="1.10.10.10:FF:000002">
    <property type="entry name" value="RNA polymerase sigma factor SigA"/>
    <property type="match status" value="1"/>
</dbReference>
<dbReference type="FunFam" id="1.10.10.10:FF:000004">
    <property type="entry name" value="RNA polymerase sigma factor SigA"/>
    <property type="match status" value="1"/>
</dbReference>
<dbReference type="FunFam" id="1.10.601.10:FF:000001">
    <property type="entry name" value="RNA polymerase sigma factor SigA"/>
    <property type="match status" value="1"/>
</dbReference>
<dbReference type="Gene3D" id="1.10.601.10">
    <property type="entry name" value="RNA Polymerase Primary Sigma Factor"/>
    <property type="match status" value="2"/>
</dbReference>
<dbReference type="Gene3D" id="1.10.220.120">
    <property type="entry name" value="Sigma-70 factor, region 1.1"/>
    <property type="match status" value="1"/>
</dbReference>
<dbReference type="Gene3D" id="1.10.10.10">
    <property type="entry name" value="Winged helix-like DNA-binding domain superfamily/Winged helix DNA-binding domain"/>
    <property type="match status" value="2"/>
</dbReference>
<dbReference type="HAMAP" id="MF_00963">
    <property type="entry name" value="Sigma70_RpoD_SigA"/>
    <property type="match status" value="1"/>
</dbReference>
<dbReference type="InterPro" id="IPR014284">
    <property type="entry name" value="RNA_pol_sigma-70_dom"/>
</dbReference>
<dbReference type="InterPro" id="IPR000943">
    <property type="entry name" value="RNA_pol_sigma70"/>
</dbReference>
<dbReference type="InterPro" id="IPR009042">
    <property type="entry name" value="RNA_pol_sigma70_r1_2"/>
</dbReference>
<dbReference type="InterPro" id="IPR007627">
    <property type="entry name" value="RNA_pol_sigma70_r2"/>
</dbReference>
<dbReference type="InterPro" id="IPR007624">
    <property type="entry name" value="RNA_pol_sigma70_r3"/>
</dbReference>
<dbReference type="InterPro" id="IPR007630">
    <property type="entry name" value="RNA_pol_sigma70_r4"/>
</dbReference>
<dbReference type="InterPro" id="IPR007127">
    <property type="entry name" value="RNA_pol_sigma_70_r1_1"/>
</dbReference>
<dbReference type="InterPro" id="IPR042189">
    <property type="entry name" value="RNA_pol_sigma_70_r1_1_sf"/>
</dbReference>
<dbReference type="InterPro" id="IPR013325">
    <property type="entry name" value="RNA_pol_sigma_r2"/>
</dbReference>
<dbReference type="InterPro" id="IPR013324">
    <property type="entry name" value="RNA_pol_sigma_r3/r4-like"/>
</dbReference>
<dbReference type="InterPro" id="IPR012760">
    <property type="entry name" value="RNA_pol_sigma_RpoD_C"/>
</dbReference>
<dbReference type="InterPro" id="IPR050239">
    <property type="entry name" value="Sigma-70_RNA_pol_init_factors"/>
</dbReference>
<dbReference type="InterPro" id="IPR028630">
    <property type="entry name" value="Sigma70_RpoD"/>
</dbReference>
<dbReference type="InterPro" id="IPR036388">
    <property type="entry name" value="WH-like_DNA-bd_sf"/>
</dbReference>
<dbReference type="NCBIfam" id="NF006666">
    <property type="entry name" value="PRK09210.1"/>
    <property type="match status" value="1"/>
</dbReference>
<dbReference type="NCBIfam" id="TIGR02393">
    <property type="entry name" value="RpoD_Cterm"/>
    <property type="match status" value="1"/>
</dbReference>
<dbReference type="NCBIfam" id="TIGR02937">
    <property type="entry name" value="sigma70-ECF"/>
    <property type="match status" value="1"/>
</dbReference>
<dbReference type="PANTHER" id="PTHR30603">
    <property type="entry name" value="RNA POLYMERASE SIGMA FACTOR RPO"/>
    <property type="match status" value="1"/>
</dbReference>
<dbReference type="PANTHER" id="PTHR30603:SF60">
    <property type="entry name" value="RNA POLYMERASE SIGMA FACTOR RPOD"/>
    <property type="match status" value="1"/>
</dbReference>
<dbReference type="Pfam" id="PF03979">
    <property type="entry name" value="Sigma70_r1_1"/>
    <property type="match status" value="1"/>
</dbReference>
<dbReference type="Pfam" id="PF00140">
    <property type="entry name" value="Sigma70_r1_2"/>
    <property type="match status" value="1"/>
</dbReference>
<dbReference type="Pfam" id="PF04542">
    <property type="entry name" value="Sigma70_r2"/>
    <property type="match status" value="1"/>
</dbReference>
<dbReference type="Pfam" id="PF04539">
    <property type="entry name" value="Sigma70_r3"/>
    <property type="match status" value="1"/>
</dbReference>
<dbReference type="Pfam" id="PF04545">
    <property type="entry name" value="Sigma70_r4"/>
    <property type="match status" value="1"/>
</dbReference>
<dbReference type="PRINTS" id="PR00046">
    <property type="entry name" value="SIGMA70FCT"/>
</dbReference>
<dbReference type="SUPFAM" id="SSF88946">
    <property type="entry name" value="Sigma2 domain of RNA polymerase sigma factors"/>
    <property type="match status" value="1"/>
</dbReference>
<dbReference type="SUPFAM" id="SSF88659">
    <property type="entry name" value="Sigma3 and sigma4 domains of RNA polymerase sigma factors"/>
    <property type="match status" value="2"/>
</dbReference>
<dbReference type="PROSITE" id="PS00715">
    <property type="entry name" value="SIGMA70_1"/>
    <property type="match status" value="1"/>
</dbReference>
<dbReference type="PROSITE" id="PS00716">
    <property type="entry name" value="SIGMA70_2"/>
    <property type="match status" value="1"/>
</dbReference>
<gene>
    <name evidence="1" type="primary">sigA</name>
    <name type="synonym">plaC</name>
    <name type="synonym">rpoD</name>
    <name type="ordered locus">SA1390</name>
</gene>
<name>SIGA_STAAN</name>
<keyword id="KW-0963">Cytoplasm</keyword>
<keyword id="KW-0238">DNA-binding</keyword>
<keyword id="KW-0731">Sigma factor</keyword>
<keyword id="KW-0804">Transcription</keyword>
<keyword id="KW-0805">Transcription regulation</keyword>
<sequence length="368" mass="42157">MSDNTVKIKKQTIDPTLTLEDVKKQLIEKGKKEGHLSHEEIAEKLQNFDIDSDQMDDFFDQLNDNDISLVNEKDSSDTDEKLNPSDLSAPPGVKINDPVRMYLKEIGRVNLLSAQEEIELAKRIEQGDEVAKSRLAEANLRLVVSIAKRYVGRGMLFLDLIQEGNMGLIKAVEKFDFNKGFKFSTYATWWIRQAITRAIADQARTIRIPVHMVETINKLIRVQRQLLQDLGRDPAPEEIGEEMDLPAEKVREVLKIAQEPVSLETPIGEEDDSHLGDFIEDQEAQSPSDHAAYELLKEQLEDVLDTLTDREENVLRLRFGLDDGRTRTLEEVGKVFGVTRERIRQIEAKALRKLRHPSRSKRLKDFMD</sequence>
<proteinExistence type="evidence at protein level"/>
<reference key="1">
    <citation type="journal article" date="2001" name="Lancet">
        <title>Whole genome sequencing of meticillin-resistant Staphylococcus aureus.</title>
        <authorList>
            <person name="Kuroda M."/>
            <person name="Ohta T."/>
            <person name="Uchiyama I."/>
            <person name="Baba T."/>
            <person name="Yuzawa H."/>
            <person name="Kobayashi I."/>
            <person name="Cui L."/>
            <person name="Oguchi A."/>
            <person name="Aoki K."/>
            <person name="Nagai Y."/>
            <person name="Lian J.-Q."/>
            <person name="Ito T."/>
            <person name="Kanamori M."/>
            <person name="Matsumaru H."/>
            <person name="Maruyama A."/>
            <person name="Murakami H."/>
            <person name="Hosoyama A."/>
            <person name="Mizutani-Ui Y."/>
            <person name="Takahashi N.K."/>
            <person name="Sawano T."/>
            <person name="Inoue R."/>
            <person name="Kaito C."/>
            <person name="Sekimizu K."/>
            <person name="Hirakawa H."/>
            <person name="Kuhara S."/>
            <person name="Goto S."/>
            <person name="Yabuzaki J."/>
            <person name="Kanehisa M."/>
            <person name="Yamashita A."/>
            <person name="Oshima K."/>
            <person name="Furuya K."/>
            <person name="Yoshino C."/>
            <person name="Shiba T."/>
            <person name="Hattori M."/>
            <person name="Ogasawara N."/>
            <person name="Hayashi H."/>
            <person name="Hiramatsu K."/>
        </authorList>
    </citation>
    <scope>NUCLEOTIDE SEQUENCE [LARGE SCALE GENOMIC DNA]</scope>
    <source>
        <strain>N315</strain>
    </source>
</reference>
<reference key="2">
    <citation type="submission" date="2007-10" db="UniProtKB">
        <title>Shotgun proteomic analysis of total and membrane protein extracts of S. aureus strain N315.</title>
        <authorList>
            <person name="Vaezzadeh A.R."/>
            <person name="Deshusses J."/>
            <person name="Lescuyer P."/>
            <person name="Hochstrasser D.F."/>
        </authorList>
    </citation>
    <scope>IDENTIFICATION BY MASS SPECTROMETRY [LARGE SCALE ANALYSIS]</scope>
    <source>
        <strain>N315</strain>
    </source>
</reference>
<comment type="function">
    <text evidence="1">Sigma factors are initiation factors that promote the attachment of RNA polymerase to specific initiation sites and are then released. This sigma factor is the primary sigma factor during exponential growth.</text>
</comment>
<comment type="subunit">
    <text evidence="1">Interacts transiently with the RNA polymerase catalytic core.</text>
</comment>
<comment type="subcellular location">
    <subcellularLocation>
        <location evidence="1">Cytoplasm</location>
    </subcellularLocation>
</comment>
<comment type="similarity">
    <text evidence="1">Belongs to the sigma-70 factor family. RpoD/SigA subfamily.</text>
</comment>
<organism>
    <name type="scientific">Staphylococcus aureus (strain N315)</name>
    <dbReference type="NCBI Taxonomy" id="158879"/>
    <lineage>
        <taxon>Bacteria</taxon>
        <taxon>Bacillati</taxon>
        <taxon>Bacillota</taxon>
        <taxon>Bacilli</taxon>
        <taxon>Bacillales</taxon>
        <taxon>Staphylococcaceae</taxon>
        <taxon>Staphylococcus</taxon>
    </lineage>
</organism>